<sequence length="54" mass="5842">IAIVDCSDYPKPVCSLEYMPLCGSDSKTYSNKCDFCNAVVDSNGTLTLSHFGKC</sequence>
<keyword id="KW-0903">Direct protein sequencing</keyword>
<keyword id="KW-1015">Disulfide bond</keyword>
<keyword id="KW-0325">Glycoprotein</keyword>
<keyword id="KW-0646">Protease inhibitor</keyword>
<keyword id="KW-0677">Repeat</keyword>
<keyword id="KW-0964">Secreted</keyword>
<keyword id="KW-0722">Serine protease inhibitor</keyword>
<proteinExistence type="evidence at protein level"/>
<feature type="chain" id="PRO_0000073144" description="Ovomucoid">
    <location>
        <begin position="1" status="less than"/>
        <end position="54" status="greater than"/>
    </location>
</feature>
<feature type="domain" description="Kazal-like" evidence="1">
    <location>
        <begin position="4"/>
        <end position="54"/>
    </location>
</feature>
<feature type="site" description="Reactive bond 3">
    <location>
        <begin position="16"/>
        <end position="17"/>
    </location>
</feature>
<feature type="glycosylation site" description="N-linked (GlcNAc...) asparagine">
    <location>
        <position position="43"/>
    </location>
</feature>
<feature type="disulfide bond">
    <location>
        <begin position="6"/>
        <end position="36"/>
    </location>
</feature>
<feature type="disulfide bond">
    <location>
        <begin position="14"/>
        <end position="33"/>
    </location>
</feature>
<feature type="disulfide bond">
    <location>
        <begin position="22"/>
        <end position="54"/>
    </location>
</feature>
<feature type="non-terminal residue">
    <location>
        <position position="1"/>
    </location>
</feature>
<feature type="non-terminal residue">
    <location>
        <position position="54"/>
    </location>
</feature>
<accession>P68377</accession>
<accession>P05578</accession>
<protein>
    <recommendedName>
        <fullName>Ovomucoid</fullName>
    </recommendedName>
</protein>
<name>IOVO_NECMO</name>
<comment type="subcellular location">
    <subcellularLocation>
        <location>Secreted</location>
    </subcellularLocation>
</comment>
<comment type="domain">
    <text>Avian ovomucoid consists of three homologous, tandem Kazal family inhibitory domains.</text>
</comment>
<organism>
    <name type="scientific">Necrosyrtes monachus</name>
    <name type="common">Hooded vulture</name>
    <name type="synonym">Neophron monachus</name>
    <dbReference type="NCBI Taxonomy" id="30399"/>
    <lineage>
        <taxon>Eukaryota</taxon>
        <taxon>Metazoa</taxon>
        <taxon>Chordata</taxon>
        <taxon>Craniata</taxon>
        <taxon>Vertebrata</taxon>
        <taxon>Euteleostomi</taxon>
        <taxon>Archelosauria</taxon>
        <taxon>Archosauria</taxon>
        <taxon>Dinosauria</taxon>
        <taxon>Saurischia</taxon>
        <taxon>Theropoda</taxon>
        <taxon>Coelurosauria</taxon>
        <taxon>Aves</taxon>
        <taxon>Neognathae</taxon>
        <taxon>Neoaves</taxon>
        <taxon>Telluraves</taxon>
        <taxon>Accipitrimorphae</taxon>
        <taxon>Accipitriformes</taxon>
        <taxon>Accipitridae</taxon>
        <taxon>Accipitrinae</taxon>
        <taxon>Necrosyrtes</taxon>
    </lineage>
</organism>
<reference key="1">
    <citation type="journal article" date="1993" name="J. Protein Chem.">
        <title>Amino acid sequences of ovomucoid third domains from 27 additional species of birds.</title>
        <authorList>
            <person name="Apostol I."/>
            <person name="Giletto A."/>
            <person name="Komiyama T."/>
            <person name="Zhang W."/>
            <person name="Laskowski M. Jr."/>
        </authorList>
    </citation>
    <scope>PROTEIN SEQUENCE</scope>
</reference>
<dbReference type="PIR" id="I61589">
    <property type="entry name" value="I61589"/>
</dbReference>
<dbReference type="SMR" id="P68377"/>
<dbReference type="GO" id="GO:0005576">
    <property type="term" value="C:extracellular region"/>
    <property type="evidence" value="ECO:0007669"/>
    <property type="project" value="UniProtKB-SubCell"/>
</dbReference>
<dbReference type="GO" id="GO:0004867">
    <property type="term" value="F:serine-type endopeptidase inhibitor activity"/>
    <property type="evidence" value="ECO:0007669"/>
    <property type="project" value="UniProtKB-KW"/>
</dbReference>
<dbReference type="CDD" id="cd00104">
    <property type="entry name" value="KAZAL_FS"/>
    <property type="match status" value="1"/>
</dbReference>
<dbReference type="FunFam" id="3.30.60.30:FF:000037">
    <property type="entry name" value="Ovomucoid"/>
    <property type="match status" value="1"/>
</dbReference>
<dbReference type="Gene3D" id="3.30.60.30">
    <property type="match status" value="1"/>
</dbReference>
<dbReference type="InterPro" id="IPR051597">
    <property type="entry name" value="Bifunctional_prot_inhibitor"/>
</dbReference>
<dbReference type="InterPro" id="IPR002350">
    <property type="entry name" value="Kazal_dom"/>
</dbReference>
<dbReference type="InterPro" id="IPR036058">
    <property type="entry name" value="Kazal_dom_sf"/>
</dbReference>
<dbReference type="InterPro" id="IPR001239">
    <property type="entry name" value="Prot_inh_Kazal-m"/>
</dbReference>
<dbReference type="PANTHER" id="PTHR47729:SF1">
    <property type="entry name" value="OVOMUCOID-LIKE-RELATED"/>
    <property type="match status" value="1"/>
</dbReference>
<dbReference type="PANTHER" id="PTHR47729">
    <property type="entry name" value="SERINE PEPTIDASE INHIBITOR, KAZAL TYPE 2, TANDEM DUPLICATE 1-RELATED"/>
    <property type="match status" value="1"/>
</dbReference>
<dbReference type="Pfam" id="PF00050">
    <property type="entry name" value="Kazal_1"/>
    <property type="match status" value="1"/>
</dbReference>
<dbReference type="PRINTS" id="PR00290">
    <property type="entry name" value="KAZALINHBTR"/>
</dbReference>
<dbReference type="SMART" id="SM00280">
    <property type="entry name" value="KAZAL"/>
    <property type="match status" value="1"/>
</dbReference>
<dbReference type="SUPFAM" id="SSF100895">
    <property type="entry name" value="Kazal-type serine protease inhibitors"/>
    <property type="match status" value="1"/>
</dbReference>
<dbReference type="PROSITE" id="PS00282">
    <property type="entry name" value="KAZAL_1"/>
    <property type="match status" value="1"/>
</dbReference>
<dbReference type="PROSITE" id="PS51465">
    <property type="entry name" value="KAZAL_2"/>
    <property type="match status" value="1"/>
</dbReference>
<evidence type="ECO:0000255" key="1">
    <source>
        <dbReference type="PROSITE-ProRule" id="PRU00798"/>
    </source>
</evidence>